<protein>
    <recommendedName>
        <fullName>Ethanolamine kinase 2</fullName>
        <shortName>EKI 2</shortName>
        <ecNumber>2.7.1.82</ecNumber>
    </recommendedName>
    <alternativeName>
        <fullName>Ethanolamine kinase-like protein</fullName>
    </alternativeName>
</protein>
<name>EKI2_RAT</name>
<reference key="1">
    <citation type="submission" date="2005-08" db="EMBL/GenBank/DDBJ databases">
        <authorList>
            <person name="Mural R.J."/>
            <person name="Adams M.D."/>
            <person name="Myers E.W."/>
            <person name="Smith H.O."/>
            <person name="Venter J.C."/>
        </authorList>
    </citation>
    <scope>NUCLEOTIDE SEQUENCE [LARGE SCALE GENOMIC DNA]</scope>
    <source>
        <strain>Brown Norway</strain>
    </source>
</reference>
<gene>
    <name type="primary">Etnk2</name>
</gene>
<sequence>MAVPPSAPVPCSPFYLRRQEACPQCSWSMEEKAVASASCWEPPGPPRAAVPCFAIAVDQDDILPGALRLIRELRPHWKPEQVRTKRFKDGITNKLLACYVEEDMRDCVLVRVYGEWTELLVDRENEIRNFQLLRAHGCAPKLYCTFQNGLCYEYMQGVALGPEHIREPQLFRLIALEMAKIHTIHANGSLPKPTLWHKMHRYFTLVKDEISPSLSADVPKVEVLEQELAWLKEHLSQLDSPVVFCHNDLLCKNIIYDSDKGHVRFIDYEYAGYNYQAFDIGNHFNEFAGVNEVDYCRYPAREIQLQWLRYYLEAQKGTAASPREVERLYAQVNKFALASHFFWALWALIQNQYSTINFDFLRYAVIRFNQYFKVKPQVSALEMPK</sequence>
<proteinExistence type="inferred from homology"/>
<comment type="function">
    <text>Highly specific for ethanolamine phosphorylation. Does not have choline kinase activity.</text>
</comment>
<comment type="catalytic activity">
    <reaction>
        <text>ethanolamine + ATP = phosphoethanolamine + ADP + H(+)</text>
        <dbReference type="Rhea" id="RHEA:13069"/>
        <dbReference type="ChEBI" id="CHEBI:15378"/>
        <dbReference type="ChEBI" id="CHEBI:30616"/>
        <dbReference type="ChEBI" id="CHEBI:57603"/>
        <dbReference type="ChEBI" id="CHEBI:58190"/>
        <dbReference type="ChEBI" id="CHEBI:456216"/>
        <dbReference type="EC" id="2.7.1.82"/>
    </reaction>
</comment>
<comment type="pathway">
    <text>Phospholipid metabolism; phosphatidylethanolamine biosynthesis; phosphatidylethanolamine from ethanolamine: step 1/3.</text>
</comment>
<comment type="similarity">
    <text evidence="1">Belongs to the choline/ethanolamine kinase family.</text>
</comment>
<comment type="sequence caution" evidence="1">
    <conflict type="erroneous gene model prediction">
        <sequence resource="EMBL-CDS" id="EDM09769"/>
    </conflict>
</comment>
<comment type="sequence caution" evidence="1">
    <conflict type="erroneous gene model prediction">
        <sequence resource="EMBL-CDS" id="EDM09770"/>
    </conflict>
</comment>
<feature type="chain" id="PRO_0000395963" description="Ethanolamine kinase 2">
    <location>
        <begin position="1"/>
        <end position="385"/>
    </location>
</feature>
<organism>
    <name type="scientific">Rattus norvegicus</name>
    <name type="common">Rat</name>
    <dbReference type="NCBI Taxonomy" id="10116"/>
    <lineage>
        <taxon>Eukaryota</taxon>
        <taxon>Metazoa</taxon>
        <taxon>Chordata</taxon>
        <taxon>Craniata</taxon>
        <taxon>Vertebrata</taxon>
        <taxon>Euteleostomi</taxon>
        <taxon>Mammalia</taxon>
        <taxon>Eutheria</taxon>
        <taxon>Euarchontoglires</taxon>
        <taxon>Glires</taxon>
        <taxon>Rodentia</taxon>
        <taxon>Myomorpha</taxon>
        <taxon>Muroidea</taxon>
        <taxon>Muridae</taxon>
        <taxon>Murinae</taxon>
        <taxon>Rattus</taxon>
    </lineage>
</organism>
<keyword id="KW-0067">ATP-binding</keyword>
<keyword id="KW-0418">Kinase</keyword>
<keyword id="KW-0444">Lipid biosynthesis</keyword>
<keyword id="KW-0443">Lipid metabolism</keyword>
<keyword id="KW-0547">Nucleotide-binding</keyword>
<keyword id="KW-0594">Phospholipid biosynthesis</keyword>
<keyword id="KW-1208">Phospholipid metabolism</keyword>
<keyword id="KW-1185">Reference proteome</keyword>
<keyword id="KW-0808">Transferase</keyword>
<accession>D3ZRW8</accession>
<accession>D4A6J5</accession>
<dbReference type="EC" id="2.7.1.82"/>
<dbReference type="EMBL" id="CH473958">
    <property type="protein sequence ID" value="EDM09769.1"/>
    <property type="status" value="ALT_SEQ"/>
    <property type="molecule type" value="Genomic_DNA"/>
</dbReference>
<dbReference type="EMBL" id="CH473958">
    <property type="protein sequence ID" value="EDM09770.1"/>
    <property type="status" value="ALT_SEQ"/>
    <property type="molecule type" value="Genomic_DNA"/>
</dbReference>
<dbReference type="RefSeq" id="NP_001101813.1">
    <property type="nucleotide sequence ID" value="NM_001108343.1"/>
</dbReference>
<dbReference type="RefSeq" id="NP_001406523.1">
    <property type="nucleotide sequence ID" value="NM_001419594.1"/>
</dbReference>
<dbReference type="SMR" id="D3ZRW8"/>
<dbReference type="FunCoup" id="D3ZRW8">
    <property type="interactions" value="1650"/>
</dbReference>
<dbReference type="STRING" id="10116.ENSRNOP00000061210"/>
<dbReference type="PhosphoSitePlus" id="D3ZRW8"/>
<dbReference type="PaxDb" id="10116-ENSRNOP00000061210"/>
<dbReference type="PeptideAtlas" id="D3ZRW8"/>
<dbReference type="GeneID" id="360843"/>
<dbReference type="UCSC" id="RGD:1305304">
    <property type="organism name" value="rat"/>
</dbReference>
<dbReference type="AGR" id="RGD:1305304"/>
<dbReference type="RGD" id="1305304">
    <property type="gene designation" value="Etnk2"/>
</dbReference>
<dbReference type="eggNOG" id="KOG4720">
    <property type="taxonomic scope" value="Eukaryota"/>
</dbReference>
<dbReference type="InParanoid" id="D3ZRW8"/>
<dbReference type="OrthoDB" id="10267235at2759"/>
<dbReference type="PhylomeDB" id="D3ZRW8"/>
<dbReference type="TreeFam" id="TF313549"/>
<dbReference type="Reactome" id="R-RNO-1483213">
    <property type="pathway name" value="Synthesis of PE"/>
</dbReference>
<dbReference type="UniPathway" id="UPA00558">
    <property type="reaction ID" value="UER00741"/>
</dbReference>
<dbReference type="PRO" id="PR:D3ZRW8"/>
<dbReference type="Proteomes" id="UP000002494">
    <property type="component" value="Chromosome 13"/>
</dbReference>
<dbReference type="Proteomes" id="UP000234681">
    <property type="component" value="Chromosome 13"/>
</dbReference>
<dbReference type="Bgee" id="ENSRNOG00000028368">
    <property type="expression patterns" value="Expressed in liver and 17 other cell types or tissues"/>
</dbReference>
<dbReference type="ExpressionAtlas" id="D3ZRW8">
    <property type="expression patterns" value="baseline and differential"/>
</dbReference>
<dbReference type="GO" id="GO:0005737">
    <property type="term" value="C:cytoplasm"/>
    <property type="evidence" value="ECO:0000318"/>
    <property type="project" value="GO_Central"/>
</dbReference>
<dbReference type="GO" id="GO:0005524">
    <property type="term" value="F:ATP binding"/>
    <property type="evidence" value="ECO:0007669"/>
    <property type="project" value="UniProtKB-KW"/>
</dbReference>
<dbReference type="GO" id="GO:0004305">
    <property type="term" value="F:ethanolamine kinase activity"/>
    <property type="evidence" value="ECO:0000266"/>
    <property type="project" value="RGD"/>
</dbReference>
<dbReference type="GO" id="GO:0001701">
    <property type="term" value="P:in utero embryonic development"/>
    <property type="evidence" value="ECO:0000266"/>
    <property type="project" value="RGD"/>
</dbReference>
<dbReference type="GO" id="GO:0035264">
    <property type="term" value="P:multicellular organism growth"/>
    <property type="evidence" value="ECO:0000266"/>
    <property type="project" value="RGD"/>
</dbReference>
<dbReference type="GO" id="GO:0006646">
    <property type="term" value="P:phosphatidylethanolamine biosynthetic process"/>
    <property type="evidence" value="ECO:0000266"/>
    <property type="project" value="RGD"/>
</dbReference>
<dbReference type="GO" id="GO:0001890">
    <property type="term" value="P:placenta development"/>
    <property type="evidence" value="ECO:0000266"/>
    <property type="project" value="RGD"/>
</dbReference>
<dbReference type="GO" id="GO:0009791">
    <property type="term" value="P:post-embryonic development"/>
    <property type="evidence" value="ECO:0000266"/>
    <property type="project" value="RGD"/>
</dbReference>
<dbReference type="CDD" id="cd05157">
    <property type="entry name" value="ETNK_euk"/>
    <property type="match status" value="1"/>
</dbReference>
<dbReference type="FunFam" id="3.90.1200.10:FF:000002">
    <property type="entry name" value="Ethanolamine kinase 1"/>
    <property type="match status" value="1"/>
</dbReference>
<dbReference type="Gene3D" id="3.90.1200.10">
    <property type="match status" value="1"/>
</dbReference>
<dbReference type="Gene3D" id="3.30.200.20">
    <property type="entry name" value="Phosphorylase Kinase, domain 1"/>
    <property type="match status" value="1"/>
</dbReference>
<dbReference type="InterPro" id="IPR011009">
    <property type="entry name" value="Kinase-like_dom_sf"/>
</dbReference>
<dbReference type="PANTHER" id="PTHR22603">
    <property type="entry name" value="CHOLINE/ETHANOALAMINE KINASE"/>
    <property type="match status" value="1"/>
</dbReference>
<dbReference type="PANTHER" id="PTHR22603:SF94">
    <property type="entry name" value="ETHANOLAMINE KINASE 2"/>
    <property type="match status" value="1"/>
</dbReference>
<dbReference type="Pfam" id="PF01633">
    <property type="entry name" value="Choline_kinase"/>
    <property type="match status" value="1"/>
</dbReference>
<dbReference type="SUPFAM" id="SSF56112">
    <property type="entry name" value="Protein kinase-like (PK-like)"/>
    <property type="match status" value="1"/>
</dbReference>
<evidence type="ECO:0000305" key="1"/>